<keyword id="KW-0131">Cell cycle</keyword>
<keyword id="KW-0132">Cell division</keyword>
<keyword id="KW-0963">Cytoplasm</keyword>
<keyword id="KW-0717">Septation</keyword>
<evidence type="ECO:0000255" key="1">
    <source>
        <dbReference type="HAMAP-Rule" id="MF_01197"/>
    </source>
</evidence>
<evidence type="ECO:0000256" key="2">
    <source>
        <dbReference type="SAM" id="MobiDB-lite"/>
    </source>
</evidence>
<evidence type="ECO:0000305" key="3"/>
<comment type="function">
    <text evidence="1">Cell division protein that is part of the divisome complex and is recruited early to the Z-ring. Probably stimulates Z-ring formation, perhaps through the cross-linking of FtsZ protofilaments. Its function overlaps with FtsA.</text>
</comment>
<comment type="subunit">
    <text evidence="1">Homodimer. Interacts with FtsZ.</text>
</comment>
<comment type="subcellular location">
    <subcellularLocation>
        <location evidence="1">Cytoplasm</location>
    </subcellularLocation>
    <text evidence="1">Localizes to the division site, in a FtsZ-dependent manner.</text>
</comment>
<comment type="similarity">
    <text evidence="1">Belongs to the SepF family.</text>
</comment>
<comment type="sequence caution" evidence="3">
    <conflict type="erroneous initiation">
        <sequence resource="EMBL-CDS" id="CAQ01489"/>
    </conflict>
</comment>
<name>SEPF_CLASE</name>
<reference key="1">
    <citation type="journal article" date="2008" name="J. Bacteriol.">
        <title>Genome of the actinomycete plant pathogen Clavibacter michiganensis subsp. sepedonicus suggests recent niche adaptation.</title>
        <authorList>
            <person name="Bentley S.D."/>
            <person name="Corton C."/>
            <person name="Brown S.E."/>
            <person name="Barron A."/>
            <person name="Clark L."/>
            <person name="Doggett J."/>
            <person name="Harris B."/>
            <person name="Ormond D."/>
            <person name="Quail M.A."/>
            <person name="May G."/>
            <person name="Francis D."/>
            <person name="Knudson D."/>
            <person name="Parkhill J."/>
            <person name="Ishimaru C.A."/>
        </authorList>
    </citation>
    <scope>NUCLEOTIDE SEQUENCE [LARGE SCALE GENOMIC DNA]</scope>
    <source>
        <strain>ATCC 33113 / DSM 20744 / JCM 9667 / LMG 2889 / ICMP 2535 / C-1</strain>
    </source>
</reference>
<accession>B0RIJ8</accession>
<sequence length="164" mass="17865">MANPLRKTMVYLGLADEELDYQQGQQPAQQQQSPVQAVPTPVPAPQQQAKRAPVTPLHKPSTTTRNAAPAEMNEILTVHPKAYKDAQVIAENFREGVPVIINLSQMTDDDARRLIDFASGLSIGLYGKIERVTAKVFLLSPSHVAVSGEQSATEAEVEASFFGR</sequence>
<gene>
    <name evidence="1" type="primary">sepF</name>
    <name type="ordered locus">CMS1378</name>
</gene>
<proteinExistence type="inferred from homology"/>
<feature type="chain" id="PRO_0000333992" description="Cell division protein SepF">
    <location>
        <begin position="1"/>
        <end position="164"/>
    </location>
</feature>
<feature type="region of interest" description="Disordered" evidence="2">
    <location>
        <begin position="21"/>
        <end position="71"/>
    </location>
</feature>
<feature type="compositionally biased region" description="Low complexity" evidence="2">
    <location>
        <begin position="22"/>
        <end position="49"/>
    </location>
</feature>
<protein>
    <recommendedName>
        <fullName evidence="1">Cell division protein SepF</fullName>
    </recommendedName>
</protein>
<dbReference type="EMBL" id="AM849034">
    <property type="protein sequence ID" value="CAQ01489.1"/>
    <property type="status" value="ALT_INIT"/>
    <property type="molecule type" value="Genomic_DNA"/>
</dbReference>
<dbReference type="RefSeq" id="WP_041464928.1">
    <property type="nucleotide sequence ID" value="NZ_MZMN01000003.1"/>
</dbReference>
<dbReference type="SMR" id="B0RIJ8"/>
<dbReference type="STRING" id="31964.CMS1378"/>
<dbReference type="KEGG" id="cms:CMS1378"/>
<dbReference type="eggNOG" id="COG1799">
    <property type="taxonomic scope" value="Bacteria"/>
</dbReference>
<dbReference type="HOGENOM" id="CLU_078499_0_2_11"/>
<dbReference type="OrthoDB" id="3731101at2"/>
<dbReference type="Proteomes" id="UP000001318">
    <property type="component" value="Chromosome"/>
</dbReference>
<dbReference type="GO" id="GO:0005737">
    <property type="term" value="C:cytoplasm"/>
    <property type="evidence" value="ECO:0007669"/>
    <property type="project" value="UniProtKB-SubCell"/>
</dbReference>
<dbReference type="GO" id="GO:0000917">
    <property type="term" value="P:division septum assembly"/>
    <property type="evidence" value="ECO:0007669"/>
    <property type="project" value="UniProtKB-KW"/>
</dbReference>
<dbReference type="GO" id="GO:0043093">
    <property type="term" value="P:FtsZ-dependent cytokinesis"/>
    <property type="evidence" value="ECO:0007669"/>
    <property type="project" value="UniProtKB-UniRule"/>
</dbReference>
<dbReference type="Gene3D" id="3.30.110.150">
    <property type="entry name" value="SepF-like protein"/>
    <property type="match status" value="1"/>
</dbReference>
<dbReference type="HAMAP" id="MF_01197">
    <property type="entry name" value="SepF"/>
    <property type="match status" value="1"/>
</dbReference>
<dbReference type="InterPro" id="IPR023052">
    <property type="entry name" value="Cell_div_SepF"/>
</dbReference>
<dbReference type="InterPro" id="IPR007561">
    <property type="entry name" value="Cell_div_SepF/SepF-rel"/>
</dbReference>
<dbReference type="InterPro" id="IPR038594">
    <property type="entry name" value="SepF-like_sf"/>
</dbReference>
<dbReference type="PANTHER" id="PTHR35798">
    <property type="entry name" value="CELL DIVISION PROTEIN SEPF"/>
    <property type="match status" value="1"/>
</dbReference>
<dbReference type="PANTHER" id="PTHR35798:SF1">
    <property type="entry name" value="CELL DIVISION PROTEIN SEPF"/>
    <property type="match status" value="1"/>
</dbReference>
<dbReference type="Pfam" id="PF04472">
    <property type="entry name" value="SepF"/>
    <property type="match status" value="1"/>
</dbReference>
<organism>
    <name type="scientific">Clavibacter sepedonicus</name>
    <name type="common">Clavibacter michiganensis subsp. sepedonicus</name>
    <dbReference type="NCBI Taxonomy" id="31964"/>
    <lineage>
        <taxon>Bacteria</taxon>
        <taxon>Bacillati</taxon>
        <taxon>Actinomycetota</taxon>
        <taxon>Actinomycetes</taxon>
        <taxon>Micrococcales</taxon>
        <taxon>Microbacteriaceae</taxon>
        <taxon>Clavibacter</taxon>
    </lineage>
</organism>